<gene>
    <name evidence="1" type="primary">gatB</name>
    <name type="ordered locus">Pfl01_0835</name>
</gene>
<evidence type="ECO:0000255" key="1">
    <source>
        <dbReference type="HAMAP-Rule" id="MF_00121"/>
    </source>
</evidence>
<comment type="function">
    <text evidence="1">Allows the formation of correctly charged Asn-tRNA(Asn) or Gln-tRNA(Gln) through the transamidation of misacylated Asp-tRNA(Asn) or Glu-tRNA(Gln) in organisms which lack either or both of asparaginyl-tRNA or glutaminyl-tRNA synthetases. The reaction takes place in the presence of glutamine and ATP through an activated phospho-Asp-tRNA(Asn) or phospho-Glu-tRNA(Gln).</text>
</comment>
<comment type="catalytic activity">
    <reaction evidence="1">
        <text>L-glutamyl-tRNA(Gln) + L-glutamine + ATP + H2O = L-glutaminyl-tRNA(Gln) + L-glutamate + ADP + phosphate + H(+)</text>
        <dbReference type="Rhea" id="RHEA:17521"/>
        <dbReference type="Rhea" id="RHEA-COMP:9681"/>
        <dbReference type="Rhea" id="RHEA-COMP:9684"/>
        <dbReference type="ChEBI" id="CHEBI:15377"/>
        <dbReference type="ChEBI" id="CHEBI:15378"/>
        <dbReference type="ChEBI" id="CHEBI:29985"/>
        <dbReference type="ChEBI" id="CHEBI:30616"/>
        <dbReference type="ChEBI" id="CHEBI:43474"/>
        <dbReference type="ChEBI" id="CHEBI:58359"/>
        <dbReference type="ChEBI" id="CHEBI:78520"/>
        <dbReference type="ChEBI" id="CHEBI:78521"/>
        <dbReference type="ChEBI" id="CHEBI:456216"/>
    </reaction>
</comment>
<comment type="catalytic activity">
    <reaction evidence="1">
        <text>L-aspartyl-tRNA(Asn) + L-glutamine + ATP + H2O = L-asparaginyl-tRNA(Asn) + L-glutamate + ADP + phosphate + 2 H(+)</text>
        <dbReference type="Rhea" id="RHEA:14513"/>
        <dbReference type="Rhea" id="RHEA-COMP:9674"/>
        <dbReference type="Rhea" id="RHEA-COMP:9677"/>
        <dbReference type="ChEBI" id="CHEBI:15377"/>
        <dbReference type="ChEBI" id="CHEBI:15378"/>
        <dbReference type="ChEBI" id="CHEBI:29985"/>
        <dbReference type="ChEBI" id="CHEBI:30616"/>
        <dbReference type="ChEBI" id="CHEBI:43474"/>
        <dbReference type="ChEBI" id="CHEBI:58359"/>
        <dbReference type="ChEBI" id="CHEBI:78515"/>
        <dbReference type="ChEBI" id="CHEBI:78516"/>
        <dbReference type="ChEBI" id="CHEBI:456216"/>
    </reaction>
</comment>
<comment type="subunit">
    <text evidence="1">Heterotrimer of A, B and C subunits.</text>
</comment>
<comment type="similarity">
    <text evidence="1">Belongs to the GatB/GatE family. GatB subfamily.</text>
</comment>
<reference key="1">
    <citation type="journal article" date="2009" name="Genome Biol.">
        <title>Genomic and genetic analyses of diversity and plant interactions of Pseudomonas fluorescens.</title>
        <authorList>
            <person name="Silby M.W."/>
            <person name="Cerdeno-Tarraga A.M."/>
            <person name="Vernikos G.S."/>
            <person name="Giddens S.R."/>
            <person name="Jackson R.W."/>
            <person name="Preston G.M."/>
            <person name="Zhang X.-X."/>
            <person name="Moon C.D."/>
            <person name="Gehrig S.M."/>
            <person name="Godfrey S.A.C."/>
            <person name="Knight C.G."/>
            <person name="Malone J.G."/>
            <person name="Robinson Z."/>
            <person name="Spiers A.J."/>
            <person name="Harris S."/>
            <person name="Challis G.L."/>
            <person name="Yaxley A.M."/>
            <person name="Harris D."/>
            <person name="Seeger K."/>
            <person name="Murphy L."/>
            <person name="Rutter S."/>
            <person name="Squares R."/>
            <person name="Quail M.A."/>
            <person name="Saunders E."/>
            <person name="Mavromatis K."/>
            <person name="Brettin T.S."/>
            <person name="Bentley S.D."/>
            <person name="Hothersall J."/>
            <person name="Stephens E."/>
            <person name="Thomas C.M."/>
            <person name="Parkhill J."/>
            <person name="Levy S.B."/>
            <person name="Rainey P.B."/>
            <person name="Thomson N.R."/>
        </authorList>
    </citation>
    <scope>NUCLEOTIDE SEQUENCE [LARGE SCALE GENOMIC DNA]</scope>
    <source>
        <strain>Pf0-1</strain>
    </source>
</reference>
<keyword id="KW-0067">ATP-binding</keyword>
<keyword id="KW-0436">Ligase</keyword>
<keyword id="KW-0547">Nucleotide-binding</keyword>
<keyword id="KW-0648">Protein biosynthesis</keyword>
<proteinExistence type="inferred from homology"/>
<sequence length="481" mass="52852">MQWEVVIGLEIHTQLTTRSKIFSGSSTQFGSEPNTQASLIDLGMPGVLPVLNQEAVRMAVMFGLAIDAEIGQHNVFARKNYFYPDLPKGYQISQMELPIVGKGHLDIALEDGTVKRVGITRAHLEEDAGKSLHEEFSGATGIDLNRAGTPLLEIVSEPDMRSAKEAVAYVKAIHALVRYLGICDGNMAEGSLRCDCNVSIRPKGQAEFGTRCEIKNVNSFRFIEKAINSEIQRQIDLIEDGGKVIQQTRLYDPNKDETRPMRSKEEANDYRYFPDPDLLPVVIEDSFLNDVRATLPELPPQKRERFQSAFGLSAYDANVLATSREQADYFEKVASIGGDAKLAANWVMVELGSLLNKQNLDIEDSPVSAEQLGGMLQRIKDNTISGKIAKVVFEAMANGEGSADEIIEKCGLKQVTDTGAISAVLDEMLAANAEQVEQYRAADEAKRGKMFGFFVGQAMKASKGKANPQQVNELLKSKLEG</sequence>
<accession>Q3KI28</accession>
<name>GATB_PSEPF</name>
<organism>
    <name type="scientific">Pseudomonas fluorescens (strain Pf0-1)</name>
    <dbReference type="NCBI Taxonomy" id="205922"/>
    <lineage>
        <taxon>Bacteria</taxon>
        <taxon>Pseudomonadati</taxon>
        <taxon>Pseudomonadota</taxon>
        <taxon>Gammaproteobacteria</taxon>
        <taxon>Pseudomonadales</taxon>
        <taxon>Pseudomonadaceae</taxon>
        <taxon>Pseudomonas</taxon>
    </lineage>
</organism>
<feature type="chain" id="PRO_0000241258" description="Aspartyl/glutamyl-tRNA(Asn/Gln) amidotransferase subunit B">
    <location>
        <begin position="1"/>
        <end position="481"/>
    </location>
</feature>
<dbReference type="EC" id="6.3.5.-" evidence="1"/>
<dbReference type="EMBL" id="CP000094">
    <property type="protein sequence ID" value="ABA72578.1"/>
    <property type="molecule type" value="Genomic_DNA"/>
</dbReference>
<dbReference type="RefSeq" id="WP_011332455.1">
    <property type="nucleotide sequence ID" value="NC_007492.2"/>
</dbReference>
<dbReference type="SMR" id="Q3KI28"/>
<dbReference type="KEGG" id="pfo:Pfl01_0835"/>
<dbReference type="eggNOG" id="COG0064">
    <property type="taxonomic scope" value="Bacteria"/>
</dbReference>
<dbReference type="HOGENOM" id="CLU_019240_0_0_6"/>
<dbReference type="Proteomes" id="UP000002704">
    <property type="component" value="Chromosome"/>
</dbReference>
<dbReference type="GO" id="GO:0050566">
    <property type="term" value="F:asparaginyl-tRNA synthase (glutamine-hydrolyzing) activity"/>
    <property type="evidence" value="ECO:0007669"/>
    <property type="project" value="RHEA"/>
</dbReference>
<dbReference type="GO" id="GO:0005524">
    <property type="term" value="F:ATP binding"/>
    <property type="evidence" value="ECO:0007669"/>
    <property type="project" value="UniProtKB-KW"/>
</dbReference>
<dbReference type="GO" id="GO:0050567">
    <property type="term" value="F:glutaminyl-tRNA synthase (glutamine-hydrolyzing) activity"/>
    <property type="evidence" value="ECO:0007669"/>
    <property type="project" value="UniProtKB-UniRule"/>
</dbReference>
<dbReference type="GO" id="GO:0070681">
    <property type="term" value="P:glutaminyl-tRNAGln biosynthesis via transamidation"/>
    <property type="evidence" value="ECO:0007669"/>
    <property type="project" value="TreeGrafter"/>
</dbReference>
<dbReference type="GO" id="GO:0006412">
    <property type="term" value="P:translation"/>
    <property type="evidence" value="ECO:0007669"/>
    <property type="project" value="UniProtKB-UniRule"/>
</dbReference>
<dbReference type="FunFam" id="1.10.10.410:FF:000001">
    <property type="entry name" value="Aspartyl/glutamyl-tRNA(Asn/Gln) amidotransferase subunit B"/>
    <property type="match status" value="1"/>
</dbReference>
<dbReference type="FunFam" id="1.10.150.380:FF:000001">
    <property type="entry name" value="Aspartyl/glutamyl-tRNA(Asn/Gln) amidotransferase subunit B"/>
    <property type="match status" value="1"/>
</dbReference>
<dbReference type="Gene3D" id="1.10.10.410">
    <property type="match status" value="1"/>
</dbReference>
<dbReference type="Gene3D" id="1.10.150.380">
    <property type="entry name" value="GatB domain, N-terminal subdomain"/>
    <property type="match status" value="1"/>
</dbReference>
<dbReference type="HAMAP" id="MF_00121">
    <property type="entry name" value="GatB"/>
    <property type="match status" value="1"/>
</dbReference>
<dbReference type="InterPro" id="IPR017959">
    <property type="entry name" value="Asn/Gln-tRNA_amidoTrfase_suB/E"/>
</dbReference>
<dbReference type="InterPro" id="IPR006075">
    <property type="entry name" value="Asn/Gln-tRNA_Trfase_suB/E_cat"/>
</dbReference>
<dbReference type="InterPro" id="IPR018027">
    <property type="entry name" value="Asn/Gln_amidotransferase"/>
</dbReference>
<dbReference type="InterPro" id="IPR003789">
    <property type="entry name" value="Asn/Gln_tRNA_amidoTrase-B-like"/>
</dbReference>
<dbReference type="InterPro" id="IPR004413">
    <property type="entry name" value="GatB"/>
</dbReference>
<dbReference type="InterPro" id="IPR042114">
    <property type="entry name" value="GatB_C_1"/>
</dbReference>
<dbReference type="InterPro" id="IPR023168">
    <property type="entry name" value="GatB_Yqey_C_2"/>
</dbReference>
<dbReference type="InterPro" id="IPR017958">
    <property type="entry name" value="Gln-tRNA_amidoTrfase_suB_CS"/>
</dbReference>
<dbReference type="InterPro" id="IPR014746">
    <property type="entry name" value="Gln_synth/guanido_kin_cat_dom"/>
</dbReference>
<dbReference type="NCBIfam" id="TIGR00133">
    <property type="entry name" value="gatB"/>
    <property type="match status" value="1"/>
</dbReference>
<dbReference type="NCBIfam" id="NF004012">
    <property type="entry name" value="PRK05477.1-2"/>
    <property type="match status" value="1"/>
</dbReference>
<dbReference type="NCBIfam" id="NF004014">
    <property type="entry name" value="PRK05477.1-4"/>
    <property type="match status" value="1"/>
</dbReference>
<dbReference type="NCBIfam" id="NF004015">
    <property type="entry name" value="PRK05477.1-5"/>
    <property type="match status" value="1"/>
</dbReference>
<dbReference type="PANTHER" id="PTHR11659">
    <property type="entry name" value="GLUTAMYL-TRNA GLN AMIDOTRANSFERASE SUBUNIT B MITOCHONDRIAL AND PROKARYOTIC PET112-RELATED"/>
    <property type="match status" value="1"/>
</dbReference>
<dbReference type="PANTHER" id="PTHR11659:SF0">
    <property type="entry name" value="GLUTAMYL-TRNA(GLN) AMIDOTRANSFERASE SUBUNIT B, MITOCHONDRIAL"/>
    <property type="match status" value="1"/>
</dbReference>
<dbReference type="Pfam" id="PF02934">
    <property type="entry name" value="GatB_N"/>
    <property type="match status" value="1"/>
</dbReference>
<dbReference type="Pfam" id="PF02637">
    <property type="entry name" value="GatB_Yqey"/>
    <property type="match status" value="1"/>
</dbReference>
<dbReference type="SMART" id="SM00845">
    <property type="entry name" value="GatB_Yqey"/>
    <property type="match status" value="1"/>
</dbReference>
<dbReference type="SUPFAM" id="SSF89095">
    <property type="entry name" value="GatB/YqeY motif"/>
    <property type="match status" value="1"/>
</dbReference>
<dbReference type="SUPFAM" id="SSF55931">
    <property type="entry name" value="Glutamine synthetase/guanido kinase"/>
    <property type="match status" value="1"/>
</dbReference>
<dbReference type="PROSITE" id="PS01234">
    <property type="entry name" value="GATB"/>
    <property type="match status" value="1"/>
</dbReference>
<protein>
    <recommendedName>
        <fullName evidence="1">Aspartyl/glutamyl-tRNA(Asn/Gln) amidotransferase subunit B</fullName>
        <shortName evidence="1">Asp/Glu-ADT subunit B</shortName>
        <ecNumber evidence="1">6.3.5.-</ecNumber>
    </recommendedName>
</protein>